<protein>
    <recommendedName>
        <fullName evidence="1">Elongation factor Ts</fullName>
        <shortName evidence="1">EF-Ts</shortName>
    </recommendedName>
</protein>
<feature type="chain" id="PRO_1000074866" description="Elongation factor Ts">
    <location>
        <begin position="1"/>
        <end position="283"/>
    </location>
</feature>
<feature type="region of interest" description="Involved in Mg(2+) ion dislocation from EF-Tu" evidence="1">
    <location>
        <begin position="80"/>
        <end position="83"/>
    </location>
</feature>
<dbReference type="EMBL" id="CP000947">
    <property type="protein sequence ID" value="ACA30729.1"/>
    <property type="molecule type" value="Genomic_DNA"/>
</dbReference>
<dbReference type="RefSeq" id="WP_011609244.1">
    <property type="nucleotide sequence ID" value="NC_010519.1"/>
</dbReference>
<dbReference type="SMR" id="B0UT99"/>
<dbReference type="STRING" id="228400.HSM_1018"/>
<dbReference type="GeneID" id="31487317"/>
<dbReference type="KEGG" id="hsm:HSM_1018"/>
<dbReference type="HOGENOM" id="CLU_047155_0_2_6"/>
<dbReference type="GO" id="GO:0005737">
    <property type="term" value="C:cytoplasm"/>
    <property type="evidence" value="ECO:0007669"/>
    <property type="project" value="UniProtKB-SubCell"/>
</dbReference>
<dbReference type="GO" id="GO:0003746">
    <property type="term" value="F:translation elongation factor activity"/>
    <property type="evidence" value="ECO:0007669"/>
    <property type="project" value="UniProtKB-UniRule"/>
</dbReference>
<dbReference type="CDD" id="cd14275">
    <property type="entry name" value="UBA_EF-Ts"/>
    <property type="match status" value="1"/>
</dbReference>
<dbReference type="FunFam" id="1.10.286.20:FF:000001">
    <property type="entry name" value="Elongation factor Ts"/>
    <property type="match status" value="1"/>
</dbReference>
<dbReference type="FunFam" id="1.10.8.10:FF:000001">
    <property type="entry name" value="Elongation factor Ts"/>
    <property type="match status" value="1"/>
</dbReference>
<dbReference type="FunFam" id="3.30.479.20:FF:000001">
    <property type="entry name" value="Elongation factor Ts"/>
    <property type="match status" value="1"/>
</dbReference>
<dbReference type="Gene3D" id="1.10.286.20">
    <property type="match status" value="1"/>
</dbReference>
<dbReference type="Gene3D" id="1.10.8.10">
    <property type="entry name" value="DNA helicase RuvA subunit, C-terminal domain"/>
    <property type="match status" value="1"/>
</dbReference>
<dbReference type="Gene3D" id="3.30.479.20">
    <property type="entry name" value="Elongation factor Ts, dimerisation domain"/>
    <property type="match status" value="2"/>
</dbReference>
<dbReference type="HAMAP" id="MF_00050">
    <property type="entry name" value="EF_Ts"/>
    <property type="match status" value="1"/>
</dbReference>
<dbReference type="InterPro" id="IPR036402">
    <property type="entry name" value="EF-Ts_dimer_sf"/>
</dbReference>
<dbReference type="InterPro" id="IPR001816">
    <property type="entry name" value="Transl_elong_EFTs/EF1B"/>
</dbReference>
<dbReference type="InterPro" id="IPR014039">
    <property type="entry name" value="Transl_elong_EFTs/EF1B_dimer"/>
</dbReference>
<dbReference type="InterPro" id="IPR018101">
    <property type="entry name" value="Transl_elong_Ts_CS"/>
</dbReference>
<dbReference type="InterPro" id="IPR009060">
    <property type="entry name" value="UBA-like_sf"/>
</dbReference>
<dbReference type="NCBIfam" id="TIGR00116">
    <property type="entry name" value="tsf"/>
    <property type="match status" value="1"/>
</dbReference>
<dbReference type="PANTHER" id="PTHR11741">
    <property type="entry name" value="ELONGATION FACTOR TS"/>
    <property type="match status" value="1"/>
</dbReference>
<dbReference type="PANTHER" id="PTHR11741:SF0">
    <property type="entry name" value="ELONGATION FACTOR TS, MITOCHONDRIAL"/>
    <property type="match status" value="1"/>
</dbReference>
<dbReference type="Pfam" id="PF00889">
    <property type="entry name" value="EF_TS"/>
    <property type="match status" value="1"/>
</dbReference>
<dbReference type="SUPFAM" id="SSF54713">
    <property type="entry name" value="Elongation factor Ts (EF-Ts), dimerisation domain"/>
    <property type="match status" value="2"/>
</dbReference>
<dbReference type="SUPFAM" id="SSF46934">
    <property type="entry name" value="UBA-like"/>
    <property type="match status" value="1"/>
</dbReference>
<dbReference type="PROSITE" id="PS01126">
    <property type="entry name" value="EF_TS_1"/>
    <property type="match status" value="1"/>
</dbReference>
<dbReference type="PROSITE" id="PS01127">
    <property type="entry name" value="EF_TS_2"/>
    <property type="match status" value="1"/>
</dbReference>
<keyword id="KW-0963">Cytoplasm</keyword>
<keyword id="KW-0251">Elongation factor</keyword>
<keyword id="KW-0648">Protein biosynthesis</keyword>
<organism>
    <name type="scientific">Histophilus somni (strain 2336)</name>
    <name type="common">Haemophilus somnus</name>
    <dbReference type="NCBI Taxonomy" id="228400"/>
    <lineage>
        <taxon>Bacteria</taxon>
        <taxon>Pseudomonadati</taxon>
        <taxon>Pseudomonadota</taxon>
        <taxon>Gammaproteobacteria</taxon>
        <taxon>Pasteurellales</taxon>
        <taxon>Pasteurellaceae</taxon>
        <taxon>Histophilus</taxon>
    </lineage>
</organism>
<reference key="1">
    <citation type="submission" date="2008-02" db="EMBL/GenBank/DDBJ databases">
        <title>Complete sequence of Haemophilus somnus 2336.</title>
        <authorList>
            <consortium name="US DOE Joint Genome Institute"/>
            <person name="Siddaramappa S."/>
            <person name="Duncan A.J."/>
            <person name="Challacombe J.F."/>
            <person name="Rainey D."/>
            <person name="Gillaspy A.F."/>
            <person name="Carson M."/>
            <person name="Gipson J."/>
            <person name="Gipson M."/>
            <person name="Bruce D."/>
            <person name="Detter J.C."/>
            <person name="Han C.S."/>
            <person name="Land M."/>
            <person name="Tapia R."/>
            <person name="Thompson L.S."/>
            <person name="Orvis J."/>
            <person name="Zaitshik J."/>
            <person name="Barnes G."/>
            <person name="Brettin T.S."/>
            <person name="Dyer D.W."/>
            <person name="Inzana T.J."/>
        </authorList>
    </citation>
    <scope>NUCLEOTIDE SEQUENCE [LARGE SCALE GENOMIC DNA]</scope>
    <source>
        <strain>2336</strain>
    </source>
</reference>
<sequence>MAEITAALVKELRERTGAGMMECKKALVEANGDIELAIDNMRKSGQAKAAKKAGRIAAEGVIRVRIGSGFGVLVELNCETDFVAKDTGFLGLADEVADYALANKGTTIDTLATHFEDKRAALVAKIGENMTIRRVQYLEGDVIAQYLHGAKIGVLVAGSGSEEELRKVAMHVAASKPEFVNPEDVSAEVVEHERQIQIDIAINSGKPKEIAEKMVEGRMKKFTGEVSLTGQAFVMDPSVSVGDYLKSVNTSVTNFIRLEVGEGIEKVEEDFAAEVAKITGNNA</sequence>
<comment type="function">
    <text evidence="1">Associates with the EF-Tu.GDP complex and induces the exchange of GDP to GTP. It remains bound to the aminoacyl-tRNA.EF-Tu.GTP complex up to the GTP hydrolysis stage on the ribosome.</text>
</comment>
<comment type="subcellular location">
    <subcellularLocation>
        <location evidence="1">Cytoplasm</location>
    </subcellularLocation>
</comment>
<comment type="similarity">
    <text evidence="1">Belongs to the EF-Ts family.</text>
</comment>
<name>EFTS_HISS2</name>
<evidence type="ECO:0000255" key="1">
    <source>
        <dbReference type="HAMAP-Rule" id="MF_00050"/>
    </source>
</evidence>
<proteinExistence type="inferred from homology"/>
<gene>
    <name evidence="1" type="primary">tsf</name>
    <name type="ordered locus">HSM_1018</name>
</gene>
<accession>B0UT99</accession>